<comment type="function">
    <text>The light-harvesting complex (LHC) functions as a light receptor, it captures and delivers excitation energy to photosystems with which it is closely associated.</text>
</comment>
<comment type="cofactor">
    <text evidence="1">Binds at least 14 chlorophylls (8 Chl-a and 6 Chl-b) and carotenoids such as lutein and neoxanthin.</text>
</comment>
<comment type="subunit">
    <text>The LHC complex consists of chlorophyll a-b binding proteins.</text>
</comment>
<comment type="subcellular location">
    <subcellularLocation>
        <location>Plastid</location>
        <location>Chloroplast thylakoid membrane</location>
        <topology>Multi-pass membrane protein</topology>
    </subcellularLocation>
</comment>
<comment type="domain">
    <text>The N-terminus of the protein extends into the stroma where it is involved with adhesion of granal membranes and post-translational modifications; both are believed to mediate the distribution of excitation energy between photosystems I and II.</text>
</comment>
<comment type="PTM">
    <text evidence="1">Photoregulated by reversible phosphorylation of its threonine residues.</text>
</comment>
<comment type="miscellaneous">
    <text>There are at least 16 genes for the major CAB protein which can be classified into at least 5 small multigene families.</text>
</comment>
<comment type="similarity">
    <text evidence="5">Belongs to the light-harvesting chlorophyll a/b-binding (LHC) protein family.</text>
</comment>
<feature type="transit peptide" description="Chloroplast" evidence="5">
    <location>
        <begin position="1"/>
        <end position="34"/>
    </location>
</feature>
<feature type="chain" id="PRO_0000003683" description="Chlorophyll a-b binding protein 13, chloroplastic">
    <location>
        <begin position="35"/>
        <end position="266"/>
    </location>
</feature>
<feature type="transmembrane region" description="Helical" evidence="4">
    <location>
        <begin position="100"/>
        <end position="120"/>
    </location>
</feature>
<feature type="transmembrane region" description="Helical" evidence="4">
    <location>
        <begin position="152"/>
        <end position="172"/>
    </location>
</feature>
<feature type="transmembrane region" description="Helical" evidence="4">
    <location>
        <begin position="220"/>
        <end position="240"/>
    </location>
</feature>
<feature type="binding site" description="axial binding residue" evidence="3">
    <location>
        <position position="58"/>
    </location>
    <ligand>
        <name>chlorophyll b</name>
        <dbReference type="ChEBI" id="CHEBI:61721"/>
        <label>1</label>
    </ligand>
    <ligandPart>
        <name>Mg</name>
        <dbReference type="ChEBI" id="CHEBI:25107"/>
    </ligandPart>
</feature>
<feature type="binding site" evidence="1">
    <location>
        <position position="80"/>
    </location>
    <ligand>
        <name>chlorophyll a</name>
        <dbReference type="ChEBI" id="CHEBI:58416"/>
        <label>1</label>
    </ligand>
</feature>
<feature type="binding site" evidence="1">
    <location>
        <position position="86"/>
    </location>
    <ligand>
        <name>chlorophyll a</name>
        <dbReference type="ChEBI" id="CHEBI:58416"/>
        <label>1</label>
    </ligand>
</feature>
<feature type="binding site" description="axial binding residue" evidence="3">
    <location>
        <position position="99"/>
    </location>
    <ligand>
        <name>chlorophyll a</name>
        <dbReference type="ChEBI" id="CHEBI:58416"/>
        <label>1</label>
    </ligand>
    <ligandPart>
        <name>Mg</name>
        <dbReference type="ChEBI" id="CHEBI:25107"/>
    </ligandPart>
</feature>
<feature type="binding site" description="axial binding residue" evidence="3">
    <location>
        <position position="102"/>
    </location>
    <ligand>
        <name>chlorophyll a</name>
        <dbReference type="ChEBI" id="CHEBI:58416"/>
        <label>2</label>
    </ligand>
    <ligandPart>
        <name>Mg</name>
        <dbReference type="ChEBI" id="CHEBI:25107"/>
    </ligandPart>
</feature>
<feature type="binding site" evidence="1">
    <location>
        <position position="104"/>
    </location>
    <ligand>
        <name>chlorophyll b</name>
        <dbReference type="ChEBI" id="CHEBI:61721"/>
        <label>2</label>
    </ligand>
</feature>
<feature type="binding site" evidence="1">
    <location>
        <position position="137"/>
    </location>
    <ligand>
        <name>chlorophyll a</name>
        <dbReference type="ChEBI" id="CHEBI:58416"/>
        <label>3</label>
    </ligand>
</feature>
<feature type="binding site" evidence="1">
    <location>
        <position position="147"/>
    </location>
    <ligand>
        <name>chlorophyll a</name>
        <dbReference type="ChEBI" id="CHEBI:58416"/>
        <label>3</label>
    </ligand>
</feature>
<feature type="binding site" description="axial binding residue" evidence="3">
    <location>
        <position position="153"/>
    </location>
    <ligand>
        <name>chlorophyll b</name>
        <dbReference type="ChEBI" id="CHEBI:61721"/>
        <label>2</label>
    </ligand>
    <ligandPart>
        <name>Mg</name>
        <dbReference type="ChEBI" id="CHEBI:25107"/>
    </ligandPart>
</feature>
<feature type="binding site" evidence="1">
    <location>
        <position position="157"/>
    </location>
    <ligand>
        <name>chlorophyll b</name>
        <dbReference type="ChEBI" id="CHEBI:61721"/>
        <label>3</label>
    </ligand>
</feature>
<feature type="binding site" evidence="1">
    <location>
        <position position="165"/>
    </location>
    <ligand>
        <name>chlorophyll b</name>
        <dbReference type="ChEBI" id="CHEBI:61721"/>
        <label>4</label>
    </ligand>
</feature>
<feature type="binding site" evidence="2">
    <location>
        <position position="165"/>
    </location>
    <ligand>
        <name>chlorophyll b</name>
        <dbReference type="ChEBI" id="CHEBI:61721"/>
        <label>5</label>
    </ligand>
</feature>
<feature type="binding site" description="axial binding residue" evidence="3">
    <location>
        <position position="173"/>
    </location>
    <ligand>
        <name>chlorophyll b</name>
        <dbReference type="ChEBI" id="CHEBI:61721"/>
        <label>3</label>
    </ligand>
    <ligandPart>
        <name>Mg</name>
        <dbReference type="ChEBI" id="CHEBI:25107"/>
    </ligandPart>
</feature>
<feature type="binding site" evidence="1">
    <location>
        <position position="176"/>
    </location>
    <ligand>
        <name>chlorophyll b</name>
        <dbReference type="ChEBI" id="CHEBI:61721"/>
        <label>4</label>
    </ligand>
</feature>
<feature type="binding site" evidence="1">
    <location>
        <position position="182"/>
    </location>
    <ligand>
        <name>chlorophyll b</name>
        <dbReference type="ChEBI" id="CHEBI:61721"/>
        <label>2</label>
    </ligand>
</feature>
<feature type="binding site" evidence="1">
    <location>
        <position position="213"/>
    </location>
    <ligand>
        <name>chlorophyll a</name>
        <dbReference type="ChEBI" id="CHEBI:58416"/>
        <label>5</label>
    </ligand>
</feature>
<feature type="binding site" description="axial binding residue" evidence="3">
    <location>
        <position position="214"/>
    </location>
    <ligand>
        <name>chlorophyll a</name>
        <dbReference type="ChEBI" id="CHEBI:58416"/>
        <label>3</label>
    </ligand>
    <ligandPart>
        <name>Mg</name>
        <dbReference type="ChEBI" id="CHEBI:25107"/>
    </ligandPart>
</feature>
<feature type="binding site" description="axial binding residue" evidence="3">
    <location>
        <position position="217"/>
    </location>
    <ligand>
        <name>chlorophyll a</name>
        <dbReference type="ChEBI" id="CHEBI:58416"/>
        <label>4</label>
    </ligand>
    <ligandPart>
        <name>Mg</name>
        <dbReference type="ChEBI" id="CHEBI:25107"/>
    </ligandPart>
</feature>
<feature type="binding site" evidence="1">
    <location>
        <position position="219"/>
    </location>
    <ligand>
        <name>chlorophyll a</name>
        <dbReference type="ChEBI" id="CHEBI:58416"/>
        <label>1</label>
    </ligand>
</feature>
<feature type="binding site" description="axial binding residue" evidence="3">
    <location>
        <position position="231"/>
    </location>
    <ligand>
        <name>chlorophyll a</name>
        <dbReference type="ChEBI" id="CHEBI:58416"/>
        <label>5</label>
    </ligand>
    <ligandPart>
        <name>Mg</name>
        <dbReference type="ChEBI" id="CHEBI:25107"/>
    </ligandPart>
</feature>
<feature type="binding site" description="axial binding residue" evidence="3">
    <location>
        <position position="246"/>
    </location>
    <ligand>
        <name>chlorophyll a</name>
        <dbReference type="ChEBI" id="CHEBI:58416"/>
        <label>6</label>
    </ligand>
    <ligandPart>
        <name>Mg</name>
        <dbReference type="ChEBI" id="CHEBI:25107"/>
    </ligandPart>
</feature>
<feature type="binding site" evidence="1">
    <location>
        <position position="255"/>
    </location>
    <ligand>
        <name>chlorophyll a</name>
        <dbReference type="ChEBI" id="CHEBI:58416"/>
        <label>6</label>
    </ligand>
</feature>
<feature type="binding site" evidence="1">
    <location>
        <position position="262"/>
    </location>
    <ligand>
        <name>chlorophyll b</name>
        <dbReference type="ChEBI" id="CHEBI:61721"/>
        <label>5</label>
    </ligand>
</feature>
<feature type="modified residue" description="N2-acetylarginine" evidence="1">
    <location>
        <position position="35"/>
    </location>
</feature>
<feature type="modified residue" description="Phosphothreonine" evidence="1">
    <location>
        <position position="37"/>
    </location>
</feature>
<organism>
    <name type="scientific">Petunia sp.</name>
    <name type="common">Petunia</name>
    <dbReference type="NCBI Taxonomy" id="4104"/>
    <lineage>
        <taxon>Eukaryota</taxon>
        <taxon>Viridiplantae</taxon>
        <taxon>Streptophyta</taxon>
        <taxon>Embryophyta</taxon>
        <taxon>Tracheophyta</taxon>
        <taxon>Spermatophyta</taxon>
        <taxon>Magnoliopsida</taxon>
        <taxon>eudicotyledons</taxon>
        <taxon>Gunneridae</taxon>
        <taxon>Pentapetalae</taxon>
        <taxon>asterids</taxon>
        <taxon>lamiids</taxon>
        <taxon>Solanales</taxon>
        <taxon>Solanaceae</taxon>
        <taxon>Petunioideae</taxon>
        <taxon>Petunia</taxon>
    </lineage>
</organism>
<evidence type="ECO:0000250" key="1"/>
<evidence type="ECO:0000250" key="2">
    <source>
        <dbReference type="UniProtKB" id="P07371"/>
    </source>
</evidence>
<evidence type="ECO:0000250" key="3">
    <source>
        <dbReference type="UniProtKB" id="P12333"/>
    </source>
</evidence>
<evidence type="ECO:0000255" key="4"/>
<evidence type="ECO:0000305" key="5"/>
<name>CB21_PETSP</name>
<dbReference type="EMBL" id="X02357">
    <property type="protein sequence ID" value="CAA26210.1"/>
    <property type="molecule type" value="Genomic_DNA"/>
</dbReference>
<dbReference type="PIR" id="B22936">
    <property type="entry name" value="CDPJ13"/>
</dbReference>
<dbReference type="SMR" id="P04779"/>
<dbReference type="GO" id="GO:0009535">
    <property type="term" value="C:chloroplast thylakoid membrane"/>
    <property type="evidence" value="ECO:0007669"/>
    <property type="project" value="UniProtKB-SubCell"/>
</dbReference>
<dbReference type="GO" id="GO:0009522">
    <property type="term" value="C:photosystem I"/>
    <property type="evidence" value="ECO:0007669"/>
    <property type="project" value="UniProtKB-KW"/>
</dbReference>
<dbReference type="GO" id="GO:0009523">
    <property type="term" value="C:photosystem II"/>
    <property type="evidence" value="ECO:0007669"/>
    <property type="project" value="UniProtKB-KW"/>
</dbReference>
<dbReference type="GO" id="GO:0016168">
    <property type="term" value="F:chlorophyll binding"/>
    <property type="evidence" value="ECO:0007669"/>
    <property type="project" value="UniProtKB-KW"/>
</dbReference>
<dbReference type="GO" id="GO:0046872">
    <property type="term" value="F:metal ion binding"/>
    <property type="evidence" value="ECO:0007669"/>
    <property type="project" value="UniProtKB-KW"/>
</dbReference>
<dbReference type="GO" id="GO:0009765">
    <property type="term" value="P:photosynthesis, light harvesting"/>
    <property type="evidence" value="ECO:0007669"/>
    <property type="project" value="InterPro"/>
</dbReference>
<dbReference type="FunFam" id="1.10.3460.10:FF:000001">
    <property type="entry name" value="Chlorophyll a-b binding protein, chloroplastic"/>
    <property type="match status" value="1"/>
</dbReference>
<dbReference type="Gene3D" id="1.10.3460.10">
    <property type="entry name" value="Chlorophyll a/b binding protein domain"/>
    <property type="match status" value="1"/>
</dbReference>
<dbReference type="InterPro" id="IPR001344">
    <property type="entry name" value="Chloro_AB-bd_pln"/>
</dbReference>
<dbReference type="InterPro" id="IPR022796">
    <property type="entry name" value="Chloroa_b-bind"/>
</dbReference>
<dbReference type="PANTHER" id="PTHR21649">
    <property type="entry name" value="CHLOROPHYLL A/B BINDING PROTEIN"/>
    <property type="match status" value="1"/>
</dbReference>
<dbReference type="Pfam" id="PF00504">
    <property type="entry name" value="Chloroa_b-bind"/>
    <property type="match status" value="1"/>
</dbReference>
<dbReference type="SUPFAM" id="SSF103511">
    <property type="entry name" value="Chlorophyll a-b binding protein"/>
    <property type="match status" value="1"/>
</dbReference>
<proteinExistence type="inferred from homology"/>
<sequence length="266" mass="28308">MAAATMALSSSSFAGKAVNVPSSSEITRNGKVTMRKTVTKAKPVSSGSPWYGPDRVKYLGPFSGEAPSYLTGEFPGDYGWDTAGLSADPATFAKNRKLEVIHCRWTMLGALGCVFPELFARNGVKFGEAVWFKAGSQIFKEGGLDYLGNPSLVHAQSILAIWACQVVLMGAVEGYRVAGGPLGEVIDPLYPGGSFDPLGLADDPEAFAELEVKEIKNGRLAMFSMFGFFVQAIVTGKGPLENLADHLADPVNNNAWAFATNFVPGK</sequence>
<accession>P04779</accession>
<protein>
    <recommendedName>
        <fullName>Chlorophyll a-b binding protein 13, chloroplastic</fullName>
    </recommendedName>
    <alternativeName>
        <fullName>LHCII type I CAB-13</fullName>
        <shortName>LHCP</shortName>
    </alternativeName>
</protein>
<gene>
    <name type="primary">CAB13</name>
</gene>
<reference key="1">
    <citation type="journal article" date="1985" name="Nucleic Acids Res.">
        <title>The petunia chlorophyll a/b binding protein genes: a comparison of Cab genes from different gene families.</title>
        <authorList>
            <person name="Dunsmuir P."/>
        </authorList>
    </citation>
    <scope>NUCLEOTIDE SEQUENCE [GENOMIC DNA]</scope>
</reference>
<keyword id="KW-0007">Acetylation</keyword>
<keyword id="KW-0148">Chlorophyll</keyword>
<keyword id="KW-0150">Chloroplast</keyword>
<keyword id="KW-0157">Chromophore</keyword>
<keyword id="KW-0460">Magnesium</keyword>
<keyword id="KW-0472">Membrane</keyword>
<keyword id="KW-0479">Metal-binding</keyword>
<keyword id="KW-0597">Phosphoprotein</keyword>
<keyword id="KW-0602">Photosynthesis</keyword>
<keyword id="KW-0603">Photosystem I</keyword>
<keyword id="KW-0604">Photosystem II</keyword>
<keyword id="KW-0934">Plastid</keyword>
<keyword id="KW-0793">Thylakoid</keyword>
<keyword id="KW-0809">Transit peptide</keyword>
<keyword id="KW-0812">Transmembrane</keyword>
<keyword id="KW-1133">Transmembrane helix</keyword>